<keyword id="KW-0325">Glycoprotein</keyword>
<keyword id="KW-0333">Golgi apparatus</keyword>
<keyword id="KW-0472">Membrane</keyword>
<keyword id="KW-1185">Reference proteome</keyword>
<keyword id="KW-0812">Transmembrane</keyword>
<keyword id="KW-1133">Transmembrane helix</keyword>
<protein>
    <recommendedName>
        <fullName>Golgi apparatus membrane protein TVP18</fullName>
    </recommendedName>
</protein>
<feature type="chain" id="PRO_0000343033" description="Golgi apparatus membrane protein TVP18">
    <location>
        <begin position="1"/>
        <end position="148"/>
    </location>
</feature>
<feature type="transmembrane region" description="Helical" evidence="2">
    <location>
        <begin position="18"/>
        <end position="38"/>
    </location>
</feature>
<feature type="transmembrane region" description="Helical" evidence="2">
    <location>
        <begin position="40"/>
        <end position="60"/>
    </location>
</feature>
<feature type="transmembrane region" description="Helical" evidence="2">
    <location>
        <begin position="84"/>
        <end position="104"/>
    </location>
</feature>
<feature type="transmembrane region" description="Helical" evidence="2">
    <location>
        <begin position="107"/>
        <end position="127"/>
    </location>
</feature>
<feature type="glycosylation site" description="N-linked (GlcNAc...) asparagine" evidence="2">
    <location>
        <position position="11"/>
    </location>
</feature>
<evidence type="ECO:0000250" key="1"/>
<evidence type="ECO:0000255" key="2"/>
<evidence type="ECO:0000305" key="3"/>
<accession>Q6CC06</accession>
<gene>
    <name type="primary">TVP18</name>
    <name type="ordered locus">YALI0C13816g</name>
</gene>
<name>TVP18_YARLI</name>
<organism>
    <name type="scientific">Yarrowia lipolytica (strain CLIB 122 / E 150)</name>
    <name type="common">Yeast</name>
    <name type="synonym">Candida lipolytica</name>
    <dbReference type="NCBI Taxonomy" id="284591"/>
    <lineage>
        <taxon>Eukaryota</taxon>
        <taxon>Fungi</taxon>
        <taxon>Dikarya</taxon>
        <taxon>Ascomycota</taxon>
        <taxon>Saccharomycotina</taxon>
        <taxon>Dipodascomycetes</taxon>
        <taxon>Dipodascales</taxon>
        <taxon>Dipodascales incertae sedis</taxon>
        <taxon>Yarrowia</taxon>
    </lineage>
</organism>
<dbReference type="EMBL" id="CR382129">
    <property type="protein sequence ID" value="CAG82116.1"/>
    <property type="molecule type" value="Genomic_DNA"/>
</dbReference>
<dbReference type="RefSeq" id="XP_501806.1">
    <property type="nucleotide sequence ID" value="XM_501806.1"/>
</dbReference>
<dbReference type="FunCoup" id="Q6CC06">
    <property type="interactions" value="44"/>
</dbReference>
<dbReference type="STRING" id="284591.Q6CC06"/>
<dbReference type="GlyCosmos" id="Q6CC06">
    <property type="glycosylation" value="1 site, No reported glycans"/>
</dbReference>
<dbReference type="EnsemblFungi" id="CAG82116">
    <property type="protein sequence ID" value="CAG82116"/>
    <property type="gene ID" value="YALI0_C13816g"/>
</dbReference>
<dbReference type="KEGG" id="yli:2909716"/>
<dbReference type="VEuPathDB" id="FungiDB:YALI0_C13816g"/>
<dbReference type="HOGENOM" id="CLU_118698_1_0_1"/>
<dbReference type="InParanoid" id="Q6CC06"/>
<dbReference type="OMA" id="IYAQWLG"/>
<dbReference type="OrthoDB" id="1529at4891"/>
<dbReference type="Proteomes" id="UP000001300">
    <property type="component" value="Chromosome C"/>
</dbReference>
<dbReference type="GO" id="GO:0000139">
    <property type="term" value="C:Golgi membrane"/>
    <property type="evidence" value="ECO:0000318"/>
    <property type="project" value="GO_Central"/>
</dbReference>
<dbReference type="GO" id="GO:0016192">
    <property type="term" value="P:vesicle-mediated transport"/>
    <property type="evidence" value="ECO:0000318"/>
    <property type="project" value="GO_Central"/>
</dbReference>
<dbReference type="InterPro" id="IPR019365">
    <property type="entry name" value="TVP18/Ca-channel_flower"/>
</dbReference>
<dbReference type="PANTHER" id="PTHR13314">
    <property type="entry name" value="CALCIUM CHANNEL FLOWER HOMOLOG"/>
    <property type="match status" value="1"/>
</dbReference>
<dbReference type="PANTHER" id="PTHR13314:SF2">
    <property type="entry name" value="CALCIUM CHANNEL FLOWER HOMOLOG"/>
    <property type="match status" value="1"/>
</dbReference>
<dbReference type="Pfam" id="PF10233">
    <property type="entry name" value="Cg6151-P"/>
    <property type="match status" value="1"/>
</dbReference>
<dbReference type="SMART" id="SM01077">
    <property type="entry name" value="Cg6151-P"/>
    <property type="match status" value="1"/>
</dbReference>
<proteinExistence type="inferred from homology"/>
<sequence length="148" mass="16479">MSLVEELKTRNFSIYGQWIGVLCIILCIALGIANIFHASLVIIFSIICIVQGLVVVFVEIPFLLRICPVTERFSNFIRFFNQNWPRAAFYIGMATIQYCSLIFMTTSLLVPAVFLTITSMCYALAALKHQEFTGSSTLGGAGIARQIL</sequence>
<comment type="function">
    <text evidence="1">Golgi membrane protein involved in vesicular trafficking.</text>
</comment>
<comment type="subcellular location">
    <subcellularLocation>
        <location evidence="1">Golgi apparatus membrane</location>
        <topology evidence="1">Multi-pass membrane protein</topology>
    </subcellularLocation>
</comment>
<comment type="similarity">
    <text evidence="3">Belongs to the TVP18 family.</text>
</comment>
<reference key="1">
    <citation type="journal article" date="2004" name="Nature">
        <title>Genome evolution in yeasts.</title>
        <authorList>
            <person name="Dujon B."/>
            <person name="Sherman D."/>
            <person name="Fischer G."/>
            <person name="Durrens P."/>
            <person name="Casaregola S."/>
            <person name="Lafontaine I."/>
            <person name="de Montigny J."/>
            <person name="Marck C."/>
            <person name="Neuveglise C."/>
            <person name="Talla E."/>
            <person name="Goffard N."/>
            <person name="Frangeul L."/>
            <person name="Aigle M."/>
            <person name="Anthouard V."/>
            <person name="Babour A."/>
            <person name="Barbe V."/>
            <person name="Barnay S."/>
            <person name="Blanchin S."/>
            <person name="Beckerich J.-M."/>
            <person name="Beyne E."/>
            <person name="Bleykasten C."/>
            <person name="Boisrame A."/>
            <person name="Boyer J."/>
            <person name="Cattolico L."/>
            <person name="Confanioleri F."/>
            <person name="de Daruvar A."/>
            <person name="Despons L."/>
            <person name="Fabre E."/>
            <person name="Fairhead C."/>
            <person name="Ferry-Dumazet H."/>
            <person name="Groppi A."/>
            <person name="Hantraye F."/>
            <person name="Hennequin C."/>
            <person name="Jauniaux N."/>
            <person name="Joyet P."/>
            <person name="Kachouri R."/>
            <person name="Kerrest A."/>
            <person name="Koszul R."/>
            <person name="Lemaire M."/>
            <person name="Lesur I."/>
            <person name="Ma L."/>
            <person name="Muller H."/>
            <person name="Nicaud J.-M."/>
            <person name="Nikolski M."/>
            <person name="Oztas S."/>
            <person name="Ozier-Kalogeropoulos O."/>
            <person name="Pellenz S."/>
            <person name="Potier S."/>
            <person name="Richard G.-F."/>
            <person name="Straub M.-L."/>
            <person name="Suleau A."/>
            <person name="Swennen D."/>
            <person name="Tekaia F."/>
            <person name="Wesolowski-Louvel M."/>
            <person name="Westhof E."/>
            <person name="Wirth B."/>
            <person name="Zeniou-Meyer M."/>
            <person name="Zivanovic Y."/>
            <person name="Bolotin-Fukuhara M."/>
            <person name="Thierry A."/>
            <person name="Bouchier C."/>
            <person name="Caudron B."/>
            <person name="Scarpelli C."/>
            <person name="Gaillardin C."/>
            <person name="Weissenbach J."/>
            <person name="Wincker P."/>
            <person name="Souciet J.-L."/>
        </authorList>
    </citation>
    <scope>NUCLEOTIDE SEQUENCE [LARGE SCALE GENOMIC DNA]</scope>
    <source>
        <strain>CLIB 122 / E 150</strain>
    </source>
</reference>